<gene>
    <name type="primary">OPG038</name>
    <name type="ORF">M2L</name>
    <name type="ORF">O2L</name>
</gene>
<feature type="signal peptide" evidence="2">
    <location>
        <begin position="1"/>
        <end position="17"/>
    </location>
</feature>
<feature type="chain" id="PRO_0000099631" description="Early protein OPG038">
    <location>
        <begin position="18"/>
        <end position="220"/>
    </location>
</feature>
<sequence length="220" mass="25212">MVYKLVLLFCIASLGYSVEYKNTICPPRQDYRYWYFAAELTIGVNYDINSTIIGECYMSESYIDRNANIVLTGYGLEINMTIMDTDQRFVAAAEGVGKDNKLSVMLFTTQRLDKVHHNISVIITCMEMNCGTTKYNSDLPESIHHKSSCDITINGSCVTCVNLETDPTKINPHYLHPKDKYLYHNSKYGMRGSYGVTFIDELNQCLLDIKELSYDICYRE</sequence>
<accession>P0DOL7</accession>
<accession>P34017</accession>
<comment type="function">
    <text evidence="1">Plays a role in immune evasion. When secreted, inhibits T-cell activation by preventing the binding of host CD80 and CD86 to soluble CTLA4 and CD28. In the infected cell, may inhibits host NF kappa B activation.</text>
</comment>
<comment type="subunit">
    <text evidence="1">Homooligomer. Interacts with host CD80 and CD86 when secreted.</text>
</comment>
<comment type="subcellular location">
    <subcellularLocation>
        <location evidence="1">Host endoplasmic reticulum</location>
    </subcellularLocation>
    <subcellularLocation>
        <location evidence="1">Secreted</location>
    </subcellularLocation>
</comment>
<comment type="induction">
    <text evidence="1">Expressed in the early phase of the viral replicative cycle.</text>
</comment>
<comment type="PTM">
    <text evidence="1">Glycosylated by host.</text>
</comment>
<comment type="similarity">
    <text evidence="3">Belongs to the orthopoxvirus OPG038 family.</text>
</comment>
<name>PG038_VAR67</name>
<keyword id="KW-0244">Early protein</keyword>
<keyword id="KW-0325">Glycoprotein</keyword>
<keyword id="KW-1038">Host endoplasmic reticulum</keyword>
<keyword id="KW-0945">Host-virus interaction</keyword>
<keyword id="KW-1100">Inhibition of host NF-kappa-B by virus</keyword>
<keyword id="KW-1185">Reference proteome</keyword>
<keyword id="KW-0964">Secreted</keyword>
<keyword id="KW-0732">Signal</keyword>
<keyword id="KW-0899">Viral immunoevasion</keyword>
<reference key="1">
    <citation type="journal article" date="1993" name="FEBS Lett.">
        <title>Genes of variola and vaccinia viruses necessary to overcome the host protective mechanisms.</title>
        <authorList>
            <person name="Shchelkunov S.N."/>
            <person name="Blinov V.M."/>
            <person name="Sandakhchiev L.S."/>
        </authorList>
    </citation>
    <scope>NUCLEOTIDE SEQUENCE [GENOMIC DNA]</scope>
</reference>
<dbReference type="EMBL" id="X69198">
    <property type="protein sequence ID" value="CAA48960.1"/>
    <property type="molecule type" value="Genomic_DNA"/>
</dbReference>
<dbReference type="PIR" id="I36838">
    <property type="entry name" value="I36838"/>
</dbReference>
<dbReference type="RefSeq" id="NP_042063.1">
    <property type="nucleotide sequence ID" value="NC_001611.1"/>
</dbReference>
<dbReference type="SMR" id="P0DOL7"/>
<dbReference type="GeneID" id="1486479"/>
<dbReference type="KEGG" id="vg:1486479"/>
<dbReference type="Proteomes" id="UP000002060">
    <property type="component" value="Segment"/>
</dbReference>
<dbReference type="GO" id="GO:0005576">
    <property type="term" value="C:extracellular region"/>
    <property type="evidence" value="ECO:0007669"/>
    <property type="project" value="UniProtKB-SubCell"/>
</dbReference>
<dbReference type="GO" id="GO:0044165">
    <property type="term" value="C:host cell endoplasmic reticulum"/>
    <property type="evidence" value="ECO:0007669"/>
    <property type="project" value="UniProtKB-SubCell"/>
</dbReference>
<dbReference type="GO" id="GO:0085034">
    <property type="term" value="P:symbiont-mediated suppression of host NF-kappaB cascade"/>
    <property type="evidence" value="ECO:0007669"/>
    <property type="project" value="UniProtKB-KW"/>
</dbReference>
<dbReference type="InterPro" id="IPR006971">
    <property type="entry name" value="Poxvirus_M2"/>
</dbReference>
<dbReference type="Pfam" id="PF04887">
    <property type="entry name" value="Pox_M2"/>
    <property type="match status" value="1"/>
</dbReference>
<dbReference type="PIRSF" id="PIRSF015982">
    <property type="entry name" value="VAC_M2L"/>
    <property type="match status" value="1"/>
</dbReference>
<organism>
    <name type="scientific">Variola virus (isolate Human/India/Ind3/1967)</name>
    <name type="common">VARV</name>
    <name type="synonym">Smallpox virus</name>
    <dbReference type="NCBI Taxonomy" id="587200"/>
    <lineage>
        <taxon>Viruses</taxon>
        <taxon>Varidnaviria</taxon>
        <taxon>Bamfordvirae</taxon>
        <taxon>Nucleocytoviricota</taxon>
        <taxon>Pokkesviricetes</taxon>
        <taxon>Chitovirales</taxon>
        <taxon>Poxviridae</taxon>
        <taxon>Chordopoxvirinae</taxon>
        <taxon>Orthopoxvirus</taxon>
        <taxon>Variola virus</taxon>
    </lineage>
</organism>
<proteinExistence type="inferred from homology"/>
<evidence type="ECO:0000250" key="1">
    <source>
        <dbReference type="UniProtKB" id="Q80HY2"/>
    </source>
</evidence>
<evidence type="ECO:0000255" key="2"/>
<evidence type="ECO:0000305" key="3"/>
<protein>
    <recommendedName>
        <fullName>Early protein OPG038</fullName>
    </recommendedName>
    <alternativeName>
        <fullName>Protein M2</fullName>
    </alternativeName>
</protein>
<organismHost>
    <name type="scientific">Homo sapiens</name>
    <name type="common">Human</name>
    <dbReference type="NCBI Taxonomy" id="9606"/>
</organismHost>